<comment type="function">
    <text evidence="1">Lectin component of the HRD1 complex, which functions in endoplasmic reticulum (ER) quality control and ER-associated degradation (ERAD). Specifically recognizes and binds improperly folded glycoproteins as well as hyperglycosylated proteins, retain them in the ER, and transfers them to the ubiquitination machinery and promote their degradation. Possible targets include TRPV4 as well as hyperglycosylated HSP90B1.</text>
</comment>
<comment type="subunit">
    <text evidence="1 2">Component of the HRD1 complex, which comprises at least SYNV1/HRD1, DERL1/2, FAM8A1, HERPUD1/HERP, OS9, SEL1L and UBE2J1. FAM8A1 is stabilized by interaction with SYNV1, which prevents its proteasomal degradation. OS9 and UBE2J1 recruitment to the complex may be mediated by SEL1L. Through this complex, may interact with ERLEC1 and HSPA5 (By similarity). Interacts (via C-terminus) with CPNE6 (via second C2 domain); this interaction occurs in a calcium-dependent manner in vitro (By similarity). Interacts with CREB3 (By similarity).</text>
</comment>
<comment type="subcellular location">
    <subcellularLocation>
        <location evidence="1">Endoplasmic reticulum lumen</location>
    </subcellularLocation>
</comment>
<comment type="PTM">
    <text evidence="1">Intramolecular disulfide bonds.</text>
</comment>
<comment type="similarity">
    <text evidence="6">Belongs to the OS-9 family.</text>
</comment>
<dbReference type="EMBL" id="BC104554">
    <property type="protein sequence ID" value="AAI04555.1"/>
    <property type="molecule type" value="mRNA"/>
</dbReference>
<dbReference type="RefSeq" id="NP_001029397.1">
    <property type="nucleotide sequence ID" value="NM_001034225.1"/>
</dbReference>
<dbReference type="SMR" id="Q3MHX6"/>
<dbReference type="FunCoup" id="Q3MHX6">
    <property type="interactions" value="1287"/>
</dbReference>
<dbReference type="STRING" id="9913.ENSBTAP00000009410"/>
<dbReference type="GlyCosmos" id="Q3MHX6">
    <property type="glycosylation" value="1 site, No reported glycans"/>
</dbReference>
<dbReference type="GlyGen" id="Q3MHX6">
    <property type="glycosylation" value="1 site"/>
</dbReference>
<dbReference type="PaxDb" id="9913-ENSBTAP00000009410"/>
<dbReference type="PeptideAtlas" id="Q3MHX6"/>
<dbReference type="GeneID" id="504832"/>
<dbReference type="KEGG" id="bta:504832"/>
<dbReference type="CTD" id="10956"/>
<dbReference type="eggNOG" id="KOG3394">
    <property type="taxonomic scope" value="Eukaryota"/>
</dbReference>
<dbReference type="InParanoid" id="Q3MHX6"/>
<dbReference type="OrthoDB" id="448954at2759"/>
<dbReference type="Proteomes" id="UP000009136">
    <property type="component" value="Unplaced"/>
</dbReference>
<dbReference type="GO" id="GO:0005788">
    <property type="term" value="C:endoplasmic reticulum lumen"/>
    <property type="evidence" value="ECO:0000250"/>
    <property type="project" value="UniProtKB"/>
</dbReference>
<dbReference type="GO" id="GO:0030246">
    <property type="term" value="F:carbohydrate binding"/>
    <property type="evidence" value="ECO:0007669"/>
    <property type="project" value="UniProtKB-KW"/>
</dbReference>
<dbReference type="GO" id="GO:0030968">
    <property type="term" value="P:endoplasmic reticulum unfolded protein response"/>
    <property type="evidence" value="ECO:0007669"/>
    <property type="project" value="InterPro"/>
</dbReference>
<dbReference type="GO" id="GO:0036503">
    <property type="term" value="P:ERAD pathway"/>
    <property type="evidence" value="ECO:0000250"/>
    <property type="project" value="UniProtKB"/>
</dbReference>
<dbReference type="GO" id="GO:0006621">
    <property type="term" value="P:protein retention in ER lumen"/>
    <property type="evidence" value="ECO:0000250"/>
    <property type="project" value="UniProtKB"/>
</dbReference>
<dbReference type="GO" id="GO:0034976">
    <property type="term" value="P:response to endoplasmic reticulum stress"/>
    <property type="evidence" value="ECO:0000250"/>
    <property type="project" value="UniProtKB"/>
</dbReference>
<dbReference type="GO" id="GO:0030970">
    <property type="term" value="P:retrograde protein transport, ER to cytosol"/>
    <property type="evidence" value="ECO:0000318"/>
    <property type="project" value="GO_Central"/>
</dbReference>
<dbReference type="GO" id="GO:0006511">
    <property type="term" value="P:ubiquitin-dependent protein catabolic process"/>
    <property type="evidence" value="ECO:0000250"/>
    <property type="project" value="UniProtKB"/>
</dbReference>
<dbReference type="FunFam" id="2.70.130.10:FF:000002">
    <property type="entry name" value="protein OS-9 isoform X1"/>
    <property type="match status" value="1"/>
</dbReference>
<dbReference type="Gene3D" id="2.70.130.10">
    <property type="entry name" value="Mannose-6-phosphate receptor binding domain"/>
    <property type="match status" value="1"/>
</dbReference>
<dbReference type="InterPro" id="IPR009011">
    <property type="entry name" value="Man6P_isomerase_rcpt-bd_dom_sf"/>
</dbReference>
<dbReference type="InterPro" id="IPR044865">
    <property type="entry name" value="MRH_dom"/>
</dbReference>
<dbReference type="InterPro" id="IPR045149">
    <property type="entry name" value="OS-9-like"/>
</dbReference>
<dbReference type="InterPro" id="IPR012913">
    <property type="entry name" value="OS9-like_dom"/>
</dbReference>
<dbReference type="PANTHER" id="PTHR15414">
    <property type="entry name" value="OS-9-RELATED"/>
    <property type="match status" value="1"/>
</dbReference>
<dbReference type="PANTHER" id="PTHR15414:SF5">
    <property type="entry name" value="PROTEIN OS-9"/>
    <property type="match status" value="1"/>
</dbReference>
<dbReference type="Pfam" id="PF07915">
    <property type="entry name" value="PRKCSH"/>
    <property type="match status" value="1"/>
</dbReference>
<dbReference type="SUPFAM" id="SSF50911">
    <property type="entry name" value="Mannose 6-phosphate receptor domain"/>
    <property type="match status" value="1"/>
</dbReference>
<dbReference type="PROSITE" id="PS51914">
    <property type="entry name" value="MRH"/>
    <property type="match status" value="1"/>
</dbReference>
<organism>
    <name type="scientific">Bos taurus</name>
    <name type="common">Bovine</name>
    <dbReference type="NCBI Taxonomy" id="9913"/>
    <lineage>
        <taxon>Eukaryota</taxon>
        <taxon>Metazoa</taxon>
        <taxon>Chordata</taxon>
        <taxon>Craniata</taxon>
        <taxon>Vertebrata</taxon>
        <taxon>Euteleostomi</taxon>
        <taxon>Mammalia</taxon>
        <taxon>Eutheria</taxon>
        <taxon>Laurasiatheria</taxon>
        <taxon>Artiodactyla</taxon>
        <taxon>Ruminantia</taxon>
        <taxon>Pecora</taxon>
        <taxon>Bovidae</taxon>
        <taxon>Bovinae</taxon>
        <taxon>Bos</taxon>
    </lineage>
</organism>
<feature type="signal peptide" evidence="3">
    <location>
        <begin position="1"/>
        <end position="25"/>
    </location>
</feature>
<feature type="chain" id="PRO_0000254020" description="Protein OS-9">
    <location>
        <begin position="26"/>
        <end position="667"/>
    </location>
</feature>
<feature type="domain" description="MRH" evidence="4">
    <location>
        <begin position="108"/>
        <end position="230"/>
    </location>
</feature>
<feature type="region of interest" description="Disordered" evidence="5">
    <location>
        <begin position="262"/>
        <end position="450"/>
    </location>
</feature>
<feature type="region of interest" description="Disordered" evidence="5">
    <location>
        <begin position="506"/>
        <end position="541"/>
    </location>
</feature>
<feature type="region of interest" description="Disordered" evidence="5">
    <location>
        <begin position="636"/>
        <end position="667"/>
    </location>
</feature>
<feature type="compositionally biased region" description="Basic and acidic residues" evidence="5">
    <location>
        <begin position="263"/>
        <end position="279"/>
    </location>
</feature>
<feature type="compositionally biased region" description="Basic and acidic residues" evidence="5">
    <location>
        <begin position="304"/>
        <end position="328"/>
    </location>
</feature>
<feature type="compositionally biased region" description="Basic and acidic residues" evidence="5">
    <location>
        <begin position="396"/>
        <end position="408"/>
    </location>
</feature>
<feature type="compositionally biased region" description="Acidic residues" evidence="5">
    <location>
        <begin position="410"/>
        <end position="429"/>
    </location>
</feature>
<feature type="compositionally biased region" description="Basic and acidic residues" evidence="5">
    <location>
        <begin position="430"/>
        <end position="450"/>
    </location>
</feature>
<feature type="compositionally biased region" description="Basic residues" evidence="5">
    <location>
        <begin position="514"/>
        <end position="523"/>
    </location>
</feature>
<feature type="compositionally biased region" description="Basic and acidic residues" evidence="5">
    <location>
        <begin position="636"/>
        <end position="647"/>
    </location>
</feature>
<feature type="binding site" evidence="1">
    <location>
        <position position="117"/>
    </location>
    <ligand>
        <name>a mannooligosaccharide derivative</name>
        <dbReference type="ChEBI" id="CHEBI:71274"/>
    </ligand>
</feature>
<feature type="binding site" evidence="1">
    <location>
        <position position="118"/>
    </location>
    <ligand>
        <name>a mannooligosaccharide derivative</name>
        <dbReference type="ChEBI" id="CHEBI:71274"/>
    </ligand>
</feature>
<feature type="binding site" evidence="1">
    <location>
        <position position="130"/>
    </location>
    <ligand>
        <name>a mannooligosaccharide derivative</name>
        <dbReference type="ChEBI" id="CHEBI:71274"/>
    </ligand>
</feature>
<feature type="binding site" evidence="1">
    <location>
        <position position="182"/>
    </location>
    <ligand>
        <name>a mannooligosaccharide derivative</name>
        <dbReference type="ChEBI" id="CHEBI:71274"/>
    </ligand>
</feature>
<feature type="binding site" evidence="1">
    <location>
        <position position="188"/>
    </location>
    <ligand>
        <name>a mannooligosaccharide derivative</name>
        <dbReference type="ChEBI" id="CHEBI:71274"/>
    </ligand>
</feature>
<feature type="binding site" evidence="1">
    <location>
        <position position="212"/>
    </location>
    <ligand>
        <name>a mannooligosaccharide derivative</name>
        <dbReference type="ChEBI" id="CHEBI:71274"/>
    </ligand>
</feature>
<feature type="binding site" evidence="1">
    <location>
        <position position="218"/>
    </location>
    <ligand>
        <name>a mannooligosaccharide derivative</name>
        <dbReference type="ChEBI" id="CHEBI:71274"/>
    </ligand>
</feature>
<feature type="glycosylation site" description="N-linked (GlcNAc...) asparagine" evidence="3">
    <location>
        <position position="177"/>
    </location>
</feature>
<feature type="disulfide bond" evidence="4">
    <location>
        <begin position="110"/>
        <end position="123"/>
    </location>
</feature>
<feature type="disulfide bond" evidence="4">
    <location>
        <begin position="181"/>
        <end position="216"/>
    </location>
</feature>
<feature type="disulfide bond" evidence="4">
    <location>
        <begin position="196"/>
        <end position="228"/>
    </location>
</feature>
<protein>
    <recommendedName>
        <fullName>Protein OS-9</fullName>
    </recommendedName>
</protein>
<name>OS9_BOVIN</name>
<evidence type="ECO:0000250" key="1">
    <source>
        <dbReference type="UniProtKB" id="Q13438"/>
    </source>
</evidence>
<evidence type="ECO:0000250" key="2">
    <source>
        <dbReference type="UniProtKB" id="Q8K2C7"/>
    </source>
</evidence>
<evidence type="ECO:0000255" key="3"/>
<evidence type="ECO:0000255" key="4">
    <source>
        <dbReference type="PROSITE-ProRule" id="PRU01262"/>
    </source>
</evidence>
<evidence type="ECO:0000256" key="5">
    <source>
        <dbReference type="SAM" id="MobiDB-lite"/>
    </source>
</evidence>
<evidence type="ECO:0000305" key="6"/>
<sequence length="667" mass="75779">MAAETLLSSLLGLLLLGLLLPATLTGGVGSLNLEELSEMRYGIEILPLPVMGGQSQASDVVIVSSKYKQRYECRLPAGAIHFQREREEETPAYQGPGIPELLSPMKDAPCLLKTKDWWTYEFCYGRHIQQYHMEDSEIKGEVLYLGYYQSAFDWDDETAKASKQHRLKRYHSQTYGNGSKCDLNGRPREAEVRFLCDEGAGISGDYIDRVDEPLSCSYVLTIRTPRLCPHPLLRPPPSAAPQAILCHPALQPEEYMAYVQRQADSKQYGDRAIEGRQDPDPPVWSETKPGVVPPKKAGASPAKENSKESDFWKMLHEPEEQPPEKEETQAEEQEPNLEATDPPPTSPDDFQNNVQVKVIRSPADLIRLIEELKGGTRKGKPNTGQEQPGDSATEVPSREPEMKEKGDPEQQNEVEEEEDDEDEDEDEDERQLLGEFEKELEGILLPSDRERLRAEVKAGMERELENIIQETEKELDPDGLKKESERDRAILALTSTLNKLIKRLEEKQSPELMKKHRKRRVVPKKPPPSPQSTEEDPEHRVRVRVTKLRHGGPNQDLTVLEMKRENPQLKQIEGLVKDLLEREGLTAEGKIEIKIVRPGTEGTEEDARWLTDEDTKNLKEIFFNILVQGAEEAQKERQRQKELESNYRRVWGSPGGEGTGDLDEFDF</sequence>
<gene>
    <name type="primary">OS9</name>
</gene>
<accession>Q3MHX6</accession>
<keyword id="KW-1015">Disulfide bond</keyword>
<keyword id="KW-0256">Endoplasmic reticulum</keyword>
<keyword id="KW-0325">Glycoprotein</keyword>
<keyword id="KW-0430">Lectin</keyword>
<keyword id="KW-1185">Reference proteome</keyword>
<keyword id="KW-0732">Signal</keyword>
<reference key="1">
    <citation type="submission" date="2005-09" db="EMBL/GenBank/DDBJ databases">
        <authorList>
            <consortium name="NIH - Mammalian Gene Collection (MGC) project"/>
        </authorList>
    </citation>
    <scope>NUCLEOTIDE SEQUENCE [LARGE SCALE MRNA]</scope>
    <source>
        <strain>Hereford</strain>
        <tissue>Ascending colon</tissue>
    </source>
</reference>
<proteinExistence type="evidence at transcript level"/>